<evidence type="ECO:0000250" key="1">
    <source>
        <dbReference type="UniProtKB" id="Q9D9S2"/>
    </source>
</evidence>
<evidence type="ECO:0000255" key="2"/>
<evidence type="ECO:0000269" key="3">
    <source>
    </source>
</evidence>
<evidence type="ECO:0000305" key="4"/>
<gene>
    <name type="primary">Tmem225</name>
    <name type="synonym">Pmp22cd</name>
</gene>
<feature type="chain" id="PRO_0000339352" description="Transmembrane protein 225">
    <location>
        <begin position="1"/>
        <end position="231"/>
    </location>
</feature>
<feature type="topological domain" description="Cytoplasmic" evidence="4">
    <location>
        <begin position="1"/>
        <end position="13"/>
    </location>
</feature>
<feature type="transmembrane region" description="Helical" evidence="2">
    <location>
        <begin position="14"/>
        <end position="34"/>
    </location>
</feature>
<feature type="topological domain" description="Extracellular" evidence="4">
    <location>
        <begin position="35"/>
        <end position="71"/>
    </location>
</feature>
<feature type="transmembrane region" description="Helical" evidence="2">
    <location>
        <begin position="72"/>
        <end position="92"/>
    </location>
</feature>
<feature type="topological domain" description="Cytoplasmic" evidence="4">
    <location>
        <begin position="93"/>
        <end position="99"/>
    </location>
</feature>
<feature type="transmembrane region" description="Helical" evidence="2">
    <location>
        <begin position="100"/>
        <end position="120"/>
    </location>
</feature>
<feature type="topological domain" description="Extracellular" evidence="4">
    <location>
        <begin position="121"/>
        <end position="139"/>
    </location>
</feature>
<feature type="transmembrane region" description="Helical" evidence="2">
    <location>
        <begin position="140"/>
        <end position="160"/>
    </location>
</feature>
<feature type="topological domain" description="Cytoplasmic" evidence="4">
    <location>
        <begin position="161"/>
        <end position="231"/>
    </location>
</feature>
<feature type="short sequence motif" description="RVxF" evidence="1">
    <location>
        <begin position="225"/>
        <end position="229"/>
    </location>
</feature>
<proteinExistence type="evidence at transcript level"/>
<sequence length="231" mass="26598">MMRIPNRSIQAANIFFSSGAILLLIAGLIMENWVELIPKVRKDKVTHSPWLGCCPPFWPEESLEAIRRMMMMSLNISIYLNLIIGLQFTYMISQNKCVHLLIGFLSFFTGCLLFYAIIVYHHKLNKGQYVYFVNYKTKWIVFTIYLTIALFLTCGIFSFIQCTNRCACMKFCVPHTESSSKAMTQNTIQVISLPPRSEMPRSIVHMHSDMPGKEGSISKPHLQSRRVTWAL</sequence>
<accession>Q6GV27</accession>
<protein>
    <recommendedName>
        <fullName>Transmembrane protein 225</fullName>
    </recommendedName>
</protein>
<comment type="function">
    <text evidence="1">Probably inhibits protein phosphatase 1 (PP1) in sperm via binding to catalytic subunit PPP1CC.</text>
</comment>
<comment type="subunit">
    <text evidence="1">Interacts (via RVxF motif) with PPP1CC.</text>
</comment>
<comment type="subcellular location">
    <subcellularLocation>
        <location evidence="1">Cytoplasmic vesicle</location>
        <location evidence="1">Secretory vesicle</location>
        <location evidence="1">Acrosome membrane</location>
        <topology evidence="2">Multi-pass membrane protein</topology>
    </subcellularLocation>
</comment>
<comment type="tissue specificity">
    <text evidence="3">Expressed in testis, specifically in spermatocytes and round spermatids.</text>
</comment>
<comment type="developmental stage">
    <text evidence="3">Detected in adult testis from age 13 months onwards.</text>
</comment>
<comment type="caution">
    <text evidence="4">This protein is not related to the claudin family.</text>
</comment>
<keyword id="KW-0968">Cytoplasmic vesicle</keyword>
<keyword id="KW-0472">Membrane</keyword>
<keyword id="KW-1185">Reference proteome</keyword>
<keyword id="KW-0812">Transmembrane</keyword>
<keyword id="KW-1133">Transmembrane helix</keyword>
<reference key="1">
    <citation type="journal article" date="2011" name="DNA Cell Biol.">
        <title>Localization and characterization of rat transmembrane protein 225 specifically expressed in testis.</title>
        <authorList>
            <person name="Yang S."/>
            <person name="Wang W."/>
            <person name="Lei C."/>
            <person name="Liu Q."/>
            <person name="Xu F."/>
            <person name="Xing X."/>
            <person name="Chen H."/>
            <person name="Liu J."/>
            <person name="Wu S."/>
            <person name="Wang M."/>
        </authorList>
    </citation>
    <scope>NUCLEOTIDE SEQUENCE [MRNA]</scope>
    <scope>TISSUE SPECIFICITY</scope>
    <scope>DEVELOPMENTAL STAGE</scope>
    <source>
        <strain>Sprague-Dawley</strain>
        <tissue>Testis</tissue>
    </source>
</reference>
<organism>
    <name type="scientific">Rattus norvegicus</name>
    <name type="common">Rat</name>
    <dbReference type="NCBI Taxonomy" id="10116"/>
    <lineage>
        <taxon>Eukaryota</taxon>
        <taxon>Metazoa</taxon>
        <taxon>Chordata</taxon>
        <taxon>Craniata</taxon>
        <taxon>Vertebrata</taxon>
        <taxon>Euteleostomi</taxon>
        <taxon>Mammalia</taxon>
        <taxon>Eutheria</taxon>
        <taxon>Euarchontoglires</taxon>
        <taxon>Glires</taxon>
        <taxon>Rodentia</taxon>
        <taxon>Myomorpha</taxon>
        <taxon>Muroidea</taxon>
        <taxon>Muridae</taxon>
        <taxon>Murinae</taxon>
        <taxon>Rattus</taxon>
    </lineage>
</organism>
<name>TM225_RAT</name>
<dbReference type="EMBL" id="AY634367">
    <property type="protein sequence ID" value="AAT47558.1"/>
    <property type="molecule type" value="mRNA"/>
</dbReference>
<dbReference type="RefSeq" id="NP_001019530.1">
    <property type="nucleotide sequence ID" value="NM_001024359.1"/>
</dbReference>
<dbReference type="SMR" id="Q6GV27"/>
<dbReference type="FunCoup" id="Q6GV27">
    <property type="interactions" value="1"/>
</dbReference>
<dbReference type="STRING" id="10116.ENSRNOP00000074826"/>
<dbReference type="iPTMnet" id="Q6GV27"/>
<dbReference type="PhosphoSitePlus" id="Q6GV27"/>
<dbReference type="PaxDb" id="10116-ENSRNOP00000031308"/>
<dbReference type="Ensembl" id="ENSRNOT00000084164.2">
    <property type="protein sequence ID" value="ENSRNOP00000074826.1"/>
    <property type="gene ID" value="ENSRNOG00000054439.2"/>
</dbReference>
<dbReference type="GeneID" id="500980"/>
<dbReference type="KEGG" id="rno:500980"/>
<dbReference type="UCSC" id="RGD:1562358">
    <property type="organism name" value="rat"/>
</dbReference>
<dbReference type="AGR" id="RGD:1562358"/>
<dbReference type="CTD" id="338661"/>
<dbReference type="RGD" id="1562358">
    <property type="gene designation" value="Tmem225"/>
</dbReference>
<dbReference type="eggNOG" id="ENOG502TDTU">
    <property type="taxonomic scope" value="Eukaryota"/>
</dbReference>
<dbReference type="GeneTree" id="ENSGT00390000011564"/>
<dbReference type="HOGENOM" id="CLU_074600_0_0_1"/>
<dbReference type="InParanoid" id="Q6GV27"/>
<dbReference type="OMA" id="KMNHSPW"/>
<dbReference type="OrthoDB" id="9833398at2759"/>
<dbReference type="PhylomeDB" id="Q6GV27"/>
<dbReference type="TreeFam" id="TF339613"/>
<dbReference type="PRO" id="PR:Q6GV27"/>
<dbReference type="Proteomes" id="UP000002494">
    <property type="component" value="Chromosome 8"/>
</dbReference>
<dbReference type="Bgee" id="ENSRNOG00000054439">
    <property type="expression patterns" value="Expressed in testis"/>
</dbReference>
<dbReference type="GO" id="GO:0002079">
    <property type="term" value="C:inner acrosomal membrane"/>
    <property type="evidence" value="ECO:0000266"/>
    <property type="project" value="RGD"/>
</dbReference>
<dbReference type="GO" id="GO:0002081">
    <property type="term" value="C:outer acrosomal membrane"/>
    <property type="evidence" value="ECO:0000266"/>
    <property type="project" value="RGD"/>
</dbReference>
<dbReference type="GO" id="GO:0008157">
    <property type="term" value="F:protein phosphatase 1 binding"/>
    <property type="evidence" value="ECO:0000266"/>
    <property type="project" value="RGD"/>
</dbReference>
<dbReference type="GO" id="GO:0004864">
    <property type="term" value="F:protein phosphatase inhibitor activity"/>
    <property type="evidence" value="ECO:0000266"/>
    <property type="project" value="RGD"/>
</dbReference>
<dbReference type="InterPro" id="IPR033542">
    <property type="entry name" value="TMEM225"/>
</dbReference>
<dbReference type="PANTHER" id="PTHR36477">
    <property type="entry name" value="TRANSMEMBRANE PROTEIN 225"/>
    <property type="match status" value="1"/>
</dbReference>
<dbReference type="PANTHER" id="PTHR36477:SF1">
    <property type="entry name" value="TRANSMEMBRANE PROTEIN 225"/>
    <property type="match status" value="1"/>
</dbReference>
<dbReference type="Pfam" id="PF25452">
    <property type="entry name" value="TM225"/>
    <property type="match status" value="1"/>
</dbReference>